<evidence type="ECO:0000255" key="1">
    <source>
        <dbReference type="HAMAP-Rule" id="MF_00191"/>
    </source>
</evidence>
<reference key="1">
    <citation type="journal article" date="2008" name="Proc. Natl. Acad. Sci. U.S.A.">
        <title>The genome of Cyanothece 51142, a unicellular diazotrophic cyanobacterium important in the marine nitrogen cycle.</title>
        <authorList>
            <person name="Welsh E.A."/>
            <person name="Liberton M."/>
            <person name="Stoeckel J."/>
            <person name="Loh T."/>
            <person name="Elvitigala T."/>
            <person name="Wang C."/>
            <person name="Wollam A."/>
            <person name="Fulton R.S."/>
            <person name="Clifton S.W."/>
            <person name="Jacobs J.M."/>
            <person name="Aurora R."/>
            <person name="Ghosh B.K."/>
            <person name="Sherman L.A."/>
            <person name="Smith R.D."/>
            <person name="Wilson R.K."/>
            <person name="Pakrasi H.B."/>
        </authorList>
    </citation>
    <scope>NUCLEOTIDE SEQUENCE [LARGE SCALE GENOMIC DNA]</scope>
    <source>
        <strain>ATCC 51142 / BH68</strain>
    </source>
</reference>
<comment type="function">
    <text evidence="1">Catalyzes the conversion of 1-hydroxy-2-methyl-2-(E)-butenyl 4-diphosphate (HMBPP) into a mixture of isopentenyl diphosphate (IPP) and dimethylallyl diphosphate (DMAPP). Acts in the terminal step of the DOXP/MEP pathway for isoprenoid precursor biosynthesis.</text>
</comment>
<comment type="catalytic activity">
    <reaction evidence="1">
        <text>isopentenyl diphosphate + 2 oxidized [2Fe-2S]-[ferredoxin] + H2O = (2E)-4-hydroxy-3-methylbut-2-enyl diphosphate + 2 reduced [2Fe-2S]-[ferredoxin] + 2 H(+)</text>
        <dbReference type="Rhea" id="RHEA:24488"/>
        <dbReference type="Rhea" id="RHEA-COMP:10000"/>
        <dbReference type="Rhea" id="RHEA-COMP:10001"/>
        <dbReference type="ChEBI" id="CHEBI:15377"/>
        <dbReference type="ChEBI" id="CHEBI:15378"/>
        <dbReference type="ChEBI" id="CHEBI:33737"/>
        <dbReference type="ChEBI" id="CHEBI:33738"/>
        <dbReference type="ChEBI" id="CHEBI:128753"/>
        <dbReference type="ChEBI" id="CHEBI:128769"/>
        <dbReference type="EC" id="1.17.7.4"/>
    </reaction>
</comment>
<comment type="catalytic activity">
    <reaction evidence="1">
        <text>dimethylallyl diphosphate + 2 oxidized [2Fe-2S]-[ferredoxin] + H2O = (2E)-4-hydroxy-3-methylbut-2-enyl diphosphate + 2 reduced [2Fe-2S]-[ferredoxin] + 2 H(+)</text>
        <dbReference type="Rhea" id="RHEA:24825"/>
        <dbReference type="Rhea" id="RHEA-COMP:10000"/>
        <dbReference type="Rhea" id="RHEA-COMP:10001"/>
        <dbReference type="ChEBI" id="CHEBI:15377"/>
        <dbReference type="ChEBI" id="CHEBI:15378"/>
        <dbReference type="ChEBI" id="CHEBI:33737"/>
        <dbReference type="ChEBI" id="CHEBI:33738"/>
        <dbReference type="ChEBI" id="CHEBI:57623"/>
        <dbReference type="ChEBI" id="CHEBI:128753"/>
        <dbReference type="EC" id="1.17.7.4"/>
    </reaction>
</comment>
<comment type="cofactor">
    <cofactor evidence="1">
        <name>[4Fe-4S] cluster</name>
        <dbReference type="ChEBI" id="CHEBI:49883"/>
    </cofactor>
    <text evidence="1">Binds 1 [4Fe-4S] cluster per subunit.</text>
</comment>
<comment type="pathway">
    <text evidence="1">Isoprenoid biosynthesis; dimethylallyl diphosphate biosynthesis; dimethylallyl diphosphate from (2E)-4-hydroxy-3-methylbutenyl diphosphate: step 1/1.</text>
</comment>
<comment type="pathway">
    <text evidence="1">Isoprenoid biosynthesis; isopentenyl diphosphate biosynthesis via DXP pathway; isopentenyl diphosphate from 1-deoxy-D-xylulose 5-phosphate: step 6/6.</text>
</comment>
<comment type="similarity">
    <text evidence="1">Belongs to the IspH family.</text>
</comment>
<organism>
    <name type="scientific">Crocosphaera subtropica (strain ATCC 51142 / BH68)</name>
    <name type="common">Cyanothece sp. (strain ATCC 51142)</name>
    <dbReference type="NCBI Taxonomy" id="43989"/>
    <lineage>
        <taxon>Bacteria</taxon>
        <taxon>Bacillati</taxon>
        <taxon>Cyanobacteriota</taxon>
        <taxon>Cyanophyceae</taxon>
        <taxon>Oscillatoriophycideae</taxon>
        <taxon>Chroococcales</taxon>
        <taxon>Aphanothecaceae</taxon>
        <taxon>Crocosphaera</taxon>
        <taxon>Crocosphaera subtropica</taxon>
    </lineage>
</organism>
<protein>
    <recommendedName>
        <fullName evidence="1">4-hydroxy-3-methylbut-2-enyl diphosphate reductase</fullName>
        <shortName evidence="1">HMBPP reductase</shortName>
        <ecNumber evidence="1">1.17.7.4</ecNumber>
    </recommendedName>
</protein>
<keyword id="KW-0004">4Fe-4S</keyword>
<keyword id="KW-0408">Iron</keyword>
<keyword id="KW-0411">Iron-sulfur</keyword>
<keyword id="KW-0414">Isoprene biosynthesis</keyword>
<keyword id="KW-0479">Metal-binding</keyword>
<keyword id="KW-0560">Oxidoreductase</keyword>
<keyword id="KW-1185">Reference proteome</keyword>
<sequence length="402" mass="45518">MDTKAFKRSLQQSNNYHRKGFGHETEVMGTMNTEYQSSLIQKIRENNYQWQEGDVTIKLAEAFGFCWGVERAVAMAYETRQHFPQEKIWITNEIIHNPSVNQRLLEMNVGFIEVINGSKDFSVVEAGDVVILPAFGASVTEMQLLNDKGCTIVDTTCPWVSKVWNSVEKHKKKDYTSIIHGKYKHEETVATSSFAGTYLVVLNLKEAQYVCDYILNGGNKDEFLEKFKNAHSEGFDPDKDLIRLGIANQTTMLKSETEQIGKLFETTMLKKYGPTELNEHFMSFNTICDATQERQDAMLNLVEEEVDVMVVIGGFNSSNTTHLQEISIEKGIDSYHIDSDKRILPGNKIEHKPLEKDIETKENWLPDGKIIVGVTSGASTPDKVVEAVIERIFEEKNAGVLV</sequence>
<proteinExistence type="inferred from homology"/>
<accession>B1WTZ2</accession>
<dbReference type="EC" id="1.17.7.4" evidence="1"/>
<dbReference type="EMBL" id="CP000806">
    <property type="protein sequence ID" value="ACB50458.1"/>
    <property type="molecule type" value="Genomic_DNA"/>
</dbReference>
<dbReference type="RefSeq" id="WP_009543942.1">
    <property type="nucleotide sequence ID" value="NC_010546.1"/>
</dbReference>
<dbReference type="SMR" id="B1WTZ2"/>
<dbReference type="STRING" id="43989.cce_1108"/>
<dbReference type="KEGG" id="cyt:cce_1108"/>
<dbReference type="eggNOG" id="COG0761">
    <property type="taxonomic scope" value="Bacteria"/>
</dbReference>
<dbReference type="HOGENOM" id="CLU_027486_4_0_3"/>
<dbReference type="OrthoDB" id="9804077at2"/>
<dbReference type="UniPathway" id="UPA00056">
    <property type="reaction ID" value="UER00097"/>
</dbReference>
<dbReference type="UniPathway" id="UPA00059">
    <property type="reaction ID" value="UER00105"/>
</dbReference>
<dbReference type="Proteomes" id="UP000001203">
    <property type="component" value="Chromosome circular"/>
</dbReference>
<dbReference type="GO" id="GO:0051539">
    <property type="term" value="F:4 iron, 4 sulfur cluster binding"/>
    <property type="evidence" value="ECO:0007669"/>
    <property type="project" value="UniProtKB-UniRule"/>
</dbReference>
<dbReference type="GO" id="GO:0051745">
    <property type="term" value="F:4-hydroxy-3-methylbut-2-enyl diphosphate reductase activity"/>
    <property type="evidence" value="ECO:0007669"/>
    <property type="project" value="UniProtKB-UniRule"/>
</dbReference>
<dbReference type="GO" id="GO:0046872">
    <property type="term" value="F:metal ion binding"/>
    <property type="evidence" value="ECO:0007669"/>
    <property type="project" value="UniProtKB-KW"/>
</dbReference>
<dbReference type="GO" id="GO:0050992">
    <property type="term" value="P:dimethylallyl diphosphate biosynthetic process"/>
    <property type="evidence" value="ECO:0007669"/>
    <property type="project" value="UniProtKB-UniRule"/>
</dbReference>
<dbReference type="GO" id="GO:0019288">
    <property type="term" value="P:isopentenyl diphosphate biosynthetic process, methylerythritol 4-phosphate pathway"/>
    <property type="evidence" value="ECO:0007669"/>
    <property type="project" value="UniProtKB-UniRule"/>
</dbReference>
<dbReference type="GO" id="GO:0016114">
    <property type="term" value="P:terpenoid biosynthetic process"/>
    <property type="evidence" value="ECO:0007669"/>
    <property type="project" value="UniProtKB-UniRule"/>
</dbReference>
<dbReference type="CDD" id="cd13944">
    <property type="entry name" value="lytB_ispH"/>
    <property type="match status" value="1"/>
</dbReference>
<dbReference type="Gene3D" id="3.40.50.11270">
    <property type="match status" value="1"/>
</dbReference>
<dbReference type="Gene3D" id="3.40.1010.20">
    <property type="entry name" value="4-hydroxy-3-methylbut-2-enyl diphosphate reductase, catalytic domain"/>
    <property type="match status" value="2"/>
</dbReference>
<dbReference type="HAMAP" id="MF_00191">
    <property type="entry name" value="IspH"/>
    <property type="match status" value="1"/>
</dbReference>
<dbReference type="InterPro" id="IPR003451">
    <property type="entry name" value="LytB/IspH"/>
</dbReference>
<dbReference type="NCBIfam" id="TIGR00216">
    <property type="entry name" value="ispH_lytB"/>
    <property type="match status" value="1"/>
</dbReference>
<dbReference type="NCBIfam" id="NF009911">
    <property type="entry name" value="PRK13371.1"/>
    <property type="match status" value="1"/>
</dbReference>
<dbReference type="PANTHER" id="PTHR31619">
    <property type="entry name" value="4-HYDROXY-3-METHYLBUT-2-ENYL DIPHOSPHATE REDUCTASE, CHLOROPLASTIC"/>
    <property type="match status" value="1"/>
</dbReference>
<dbReference type="PANTHER" id="PTHR31619:SF5">
    <property type="entry name" value="4-HYDROXY-3-METHYLBUT-2-ENYL DIPHOSPHATE REDUCTASE, CHLOROPLASTIC"/>
    <property type="match status" value="1"/>
</dbReference>
<dbReference type="Pfam" id="PF02401">
    <property type="entry name" value="LYTB"/>
    <property type="match status" value="1"/>
</dbReference>
<feature type="chain" id="PRO_1000098942" description="4-hydroxy-3-methylbut-2-enyl diphosphate reductase">
    <location>
        <begin position="1"/>
        <end position="402"/>
    </location>
</feature>
<feature type="active site" description="Proton donor" evidence="1">
    <location>
        <position position="187"/>
    </location>
</feature>
<feature type="binding site" evidence="1">
    <location>
        <position position="66"/>
    </location>
    <ligand>
        <name>[4Fe-4S] cluster</name>
        <dbReference type="ChEBI" id="CHEBI:49883"/>
    </ligand>
</feature>
<feature type="binding site" evidence="1">
    <location>
        <position position="96"/>
    </location>
    <ligand>
        <name>(2E)-4-hydroxy-3-methylbut-2-enyl diphosphate</name>
        <dbReference type="ChEBI" id="CHEBI:128753"/>
    </ligand>
</feature>
<feature type="binding site" evidence="1">
    <location>
        <position position="96"/>
    </location>
    <ligand>
        <name>dimethylallyl diphosphate</name>
        <dbReference type="ChEBI" id="CHEBI:57623"/>
    </ligand>
</feature>
<feature type="binding site" evidence="1">
    <location>
        <position position="96"/>
    </location>
    <ligand>
        <name>isopentenyl diphosphate</name>
        <dbReference type="ChEBI" id="CHEBI:128769"/>
    </ligand>
</feature>
<feature type="binding site" evidence="1">
    <location>
        <position position="157"/>
    </location>
    <ligand>
        <name>[4Fe-4S] cluster</name>
        <dbReference type="ChEBI" id="CHEBI:49883"/>
    </ligand>
</feature>
<feature type="binding site" evidence="1">
    <location>
        <position position="185"/>
    </location>
    <ligand>
        <name>(2E)-4-hydroxy-3-methylbut-2-enyl diphosphate</name>
        <dbReference type="ChEBI" id="CHEBI:128753"/>
    </ligand>
</feature>
<feature type="binding site" evidence="1">
    <location>
        <position position="185"/>
    </location>
    <ligand>
        <name>dimethylallyl diphosphate</name>
        <dbReference type="ChEBI" id="CHEBI:57623"/>
    </ligand>
</feature>
<feature type="binding site" evidence="1">
    <location>
        <position position="185"/>
    </location>
    <ligand>
        <name>isopentenyl diphosphate</name>
        <dbReference type="ChEBI" id="CHEBI:128769"/>
    </ligand>
</feature>
<feature type="binding site" evidence="1">
    <location>
        <position position="250"/>
    </location>
    <ligand>
        <name>(2E)-4-hydroxy-3-methylbut-2-enyl diphosphate</name>
        <dbReference type="ChEBI" id="CHEBI:128753"/>
    </ligand>
</feature>
<feature type="binding site" evidence="1">
    <location>
        <position position="288"/>
    </location>
    <ligand>
        <name>[4Fe-4S] cluster</name>
        <dbReference type="ChEBI" id="CHEBI:49883"/>
    </ligand>
</feature>
<feature type="binding site" evidence="1">
    <location>
        <position position="317"/>
    </location>
    <ligand>
        <name>(2E)-4-hydroxy-3-methylbut-2-enyl diphosphate</name>
        <dbReference type="ChEBI" id="CHEBI:128753"/>
    </ligand>
</feature>
<feature type="binding site" evidence="1">
    <location>
        <position position="317"/>
    </location>
    <ligand>
        <name>dimethylallyl diphosphate</name>
        <dbReference type="ChEBI" id="CHEBI:57623"/>
    </ligand>
</feature>
<feature type="binding site" evidence="1">
    <location>
        <position position="317"/>
    </location>
    <ligand>
        <name>isopentenyl diphosphate</name>
        <dbReference type="ChEBI" id="CHEBI:128769"/>
    </ligand>
</feature>
<feature type="binding site" evidence="1">
    <location>
        <position position="318"/>
    </location>
    <ligand>
        <name>(2E)-4-hydroxy-3-methylbut-2-enyl diphosphate</name>
        <dbReference type="ChEBI" id="CHEBI:128753"/>
    </ligand>
</feature>
<feature type="binding site" evidence="1">
    <location>
        <position position="318"/>
    </location>
    <ligand>
        <name>dimethylallyl diphosphate</name>
        <dbReference type="ChEBI" id="CHEBI:57623"/>
    </ligand>
</feature>
<feature type="binding site" evidence="1">
    <location>
        <position position="318"/>
    </location>
    <ligand>
        <name>isopentenyl diphosphate</name>
        <dbReference type="ChEBI" id="CHEBI:128769"/>
    </ligand>
</feature>
<feature type="binding site" evidence="1">
    <location>
        <position position="319"/>
    </location>
    <ligand>
        <name>(2E)-4-hydroxy-3-methylbut-2-enyl diphosphate</name>
        <dbReference type="ChEBI" id="CHEBI:128753"/>
    </ligand>
</feature>
<feature type="binding site" evidence="1">
    <location>
        <position position="319"/>
    </location>
    <ligand>
        <name>dimethylallyl diphosphate</name>
        <dbReference type="ChEBI" id="CHEBI:57623"/>
    </ligand>
</feature>
<feature type="binding site" evidence="1">
    <location>
        <position position="319"/>
    </location>
    <ligand>
        <name>isopentenyl diphosphate</name>
        <dbReference type="ChEBI" id="CHEBI:128769"/>
    </ligand>
</feature>
<feature type="binding site" evidence="1">
    <location>
        <position position="379"/>
    </location>
    <ligand>
        <name>(2E)-4-hydroxy-3-methylbut-2-enyl diphosphate</name>
        <dbReference type="ChEBI" id="CHEBI:128753"/>
    </ligand>
</feature>
<feature type="binding site" evidence="1">
    <location>
        <position position="379"/>
    </location>
    <ligand>
        <name>dimethylallyl diphosphate</name>
        <dbReference type="ChEBI" id="CHEBI:57623"/>
    </ligand>
</feature>
<feature type="binding site" evidence="1">
    <location>
        <position position="379"/>
    </location>
    <ligand>
        <name>isopentenyl diphosphate</name>
        <dbReference type="ChEBI" id="CHEBI:128769"/>
    </ligand>
</feature>
<name>ISPH_CROS5</name>
<gene>
    <name evidence="1" type="primary">ispH</name>
    <name type="ordered locus">cce_1108</name>
</gene>